<comment type="function">
    <text evidence="1 2 3 7 8 11">FAD-linked oxidoreductase; part of the gene cluster that mediates the biosynthesis of penigequinolones, potent insecticidal alkaloids that contain a highly modified 10-carbon prenyl group (PubMed:25859931). The first stage is catalyzed by the nonribosomal peptide synthetase penN that condenses anthranilic acid and O-methyl-L-tyrosine to produce 4'-methoxycyclopeptin (By similarity). 4'-methoxycyclopeptin is then converted to 4'-methoxydehydrocyclopeptin by the ketoglutarate-dependent dioxygenase penM through dehydrogenation to form a double bond between C-alpha and C-beta of the O-methyltyrosine side chain (By similarity). PenM also converts its first product methoxydehydrocyclopeptin to 4'-methoxycyclopenin (By similarity). The following conversion of 4'methoxycyclopenin into 4'-methoxyviridicatin is catalyzed by the cyclopenase penL (By similarity). 4'-methoxyviridicatin is the precursor of quinolone natural products, and is further converted to quinolinone B (Probable). The prenyltransferase penI then catalyzes the canonical Friedel-Crafts alkylation of quinolinone B with dimethylallyl cation to yield dimethylallyl quinolone, which is subjected to FAD-dependent dehydrogenation by the FAD-linked oxidoreductase penH to yield conjugated aryl diene (PubMed:25859931). The delta(3') double bond then serves as the site of the second alkylation with DMAPP catalyzed by the prenyltransferase penG to yield a carbenium ion intermediate, which can be attacked by H(2)O to yield a styrenyl quinolone containing a C3'-hydroxyprenyl chain, or undergo cyclization to yield yaequinolones J1 and J2 (PubMed:25859931). The conversion of the styrenyl quinolone into the tetrahydrofuran-containing yaequinolone C is performed by the FAD-dependent monooxygenase penE and involves epoxidation of the terminal C7'-C8' olefin, followed by epoxide ring opening initiated by the C3' hydroxyl group (PubMed:25859931). The predicted cysteine hydrolase penJ acts as an epoxide hydrolase that enhances the rate of the 5-exo-tet cyclization step, increasing the yield of yaequinolone C (PubMed:25859931, PubMed:28114276). PenF catalyzes the cationic rearrangement of the epoxide formed by penE (before ring opening to produce yaequinolone C) into yaequinolone D (PubMed:28114276). Finally, the short-chain dehydrogenase/reductase (SDR)-like reductase penD, catalyzes both the dehydration of yaequinolone D and the reduction of the resulting oxonium to yield penigequinolone (PubMed:28114276).</text>
</comment>
<comment type="catalytic activity">
    <reaction evidence="7">
        <text>peniprequinolone + A = yaequinolone E + AH2</text>
        <dbReference type="Rhea" id="RHEA:74003"/>
        <dbReference type="ChEBI" id="CHEBI:13193"/>
        <dbReference type="ChEBI" id="CHEBI:17499"/>
        <dbReference type="ChEBI" id="CHEBI:181572"/>
        <dbReference type="ChEBI" id="CHEBI:193077"/>
    </reaction>
    <physiologicalReaction direction="left-to-right" evidence="7">
        <dbReference type="Rhea" id="RHEA:74004"/>
    </physiologicalReaction>
</comment>
<comment type="cofactor">
    <cofactor evidence="10">
        <name>FAD</name>
        <dbReference type="ChEBI" id="CHEBI:57692"/>
    </cofactor>
</comment>
<comment type="pathway">
    <text evidence="7">Secondary metabolite biosynthesis.</text>
</comment>
<comment type="pathway">
    <text evidence="7">Alkaloid biosynthesis.</text>
</comment>
<comment type="pathway">
    <text evidence="7">Mycotoxin biosynthesis.</text>
</comment>
<comment type="disruption phenotype">
    <text evidence="7">Impairs the production of penigequinolone and accumulates the dimethylallyl quinolone intermediate.</text>
</comment>
<comment type="similarity">
    <text evidence="10">Belongs to the oxygen-dependent FAD-linked oxidoreductase family.</text>
</comment>
<name>PENH_PENTH</name>
<feature type="signal peptide" evidence="4">
    <location>
        <begin position="1"/>
        <end position="25"/>
    </location>
</feature>
<feature type="chain" id="PRO_5008534508" description="FAD-linked oxidoreductase penH">
    <location>
        <begin position="26"/>
        <end position="574"/>
    </location>
</feature>
<feature type="domain" description="FAD-binding PCMH-type" evidence="6">
    <location>
        <begin position="121"/>
        <end position="305"/>
    </location>
</feature>
<feature type="glycosylation site" description="N-linked (GlcNAc...) asparagine" evidence="5">
    <location>
        <position position="48"/>
    </location>
</feature>
<feature type="glycosylation site" description="N-linked (GlcNAc...) asparagine" evidence="5">
    <location>
        <position position="107"/>
    </location>
</feature>
<feature type="glycosylation site" description="N-linked (GlcNAc...) asparagine" evidence="5">
    <location>
        <position position="193"/>
    </location>
</feature>
<feature type="glycosylation site" description="N-linked (GlcNAc...) asparagine" evidence="5">
    <location>
        <position position="368"/>
    </location>
</feature>
<feature type="glycosylation site" description="N-linked (GlcNAc...) asparagine" evidence="5">
    <location>
        <position position="385"/>
    </location>
</feature>
<protein>
    <recommendedName>
        <fullName evidence="9">FAD-linked oxidoreductase penH</fullName>
        <ecNumber evidence="7">1.1.99.-</ecNumber>
    </recommendedName>
    <alternativeName>
        <fullName evidence="9">Penigequinolones biosynthesis cluster protein H</fullName>
    </alternativeName>
</protein>
<evidence type="ECO:0000250" key="1">
    <source>
        <dbReference type="UniProtKB" id="C8VJQ3"/>
    </source>
</evidence>
<evidence type="ECO:0000250" key="2">
    <source>
        <dbReference type="UniProtKB" id="Q5AR53"/>
    </source>
</evidence>
<evidence type="ECO:0000250" key="3">
    <source>
        <dbReference type="UniProtKB" id="Q5AR54"/>
    </source>
</evidence>
<evidence type="ECO:0000255" key="4"/>
<evidence type="ECO:0000255" key="5">
    <source>
        <dbReference type="PROSITE-ProRule" id="PRU00498"/>
    </source>
</evidence>
<evidence type="ECO:0000255" key="6">
    <source>
        <dbReference type="PROSITE-ProRule" id="PRU00718"/>
    </source>
</evidence>
<evidence type="ECO:0000269" key="7">
    <source>
    </source>
</evidence>
<evidence type="ECO:0000269" key="8">
    <source>
    </source>
</evidence>
<evidence type="ECO:0000303" key="9">
    <source>
    </source>
</evidence>
<evidence type="ECO:0000305" key="10"/>
<evidence type="ECO:0000305" key="11">
    <source>
    </source>
</evidence>
<reference key="1">
    <citation type="journal article" date="2015" name="J. Am. Chem. Soc.">
        <title>Tandem prenyltransferases catalyze isoprenoid elongation and complexity generation in biosynthesis of quinolone alkaloids.</title>
        <authorList>
            <person name="Zou Y."/>
            <person name="Zhan Z."/>
            <person name="Li D."/>
            <person name="Tang M."/>
            <person name="Cacho R.A."/>
            <person name="Watanabe K."/>
            <person name="Tang Y."/>
        </authorList>
    </citation>
    <scope>NUCLEOTIDE SEQUENCE [GENOMIC DNA]</scope>
    <scope>FUNCTION</scope>
    <scope>CATALYTIC ACTIVITY</scope>
    <scope>DISRUPTION PHENOTYPE</scope>
    <scope>PATHWAY</scope>
    <source>
        <strain>IBT 5891 / CBS 111225</strain>
    </source>
</reference>
<reference key="2">
    <citation type="journal article" date="2017" name="Nat. Chem. Biol.">
        <title>Enzyme-catalyzed cationic epoxide rearrangements in quinolone alkaloid biosynthesis.</title>
        <authorList>
            <person name="Zou Y."/>
            <person name="Garcia-Borras M."/>
            <person name="Tang M.C."/>
            <person name="Hirayama Y."/>
            <person name="Li D.H."/>
            <person name="Li L."/>
            <person name="Watanabe K."/>
            <person name="Houk K.N."/>
            <person name="Tang Y."/>
        </authorList>
    </citation>
    <scope>FUNCTION</scope>
</reference>
<dbReference type="EC" id="1.1.99.-" evidence="7"/>
<dbReference type="EMBL" id="KX528209">
    <property type="protein sequence ID" value="ANY57886.1"/>
    <property type="molecule type" value="Genomic_DNA"/>
</dbReference>
<dbReference type="SMR" id="A0A1B2CTB4"/>
<dbReference type="GlyCosmos" id="A0A1B2CTB4">
    <property type="glycosylation" value="5 sites, No reported glycans"/>
</dbReference>
<dbReference type="BioCyc" id="MetaCyc:MONOMER-124189"/>
<dbReference type="GO" id="GO:0071949">
    <property type="term" value="F:FAD binding"/>
    <property type="evidence" value="ECO:0007669"/>
    <property type="project" value="InterPro"/>
</dbReference>
<dbReference type="GO" id="GO:0016491">
    <property type="term" value="F:oxidoreductase activity"/>
    <property type="evidence" value="ECO:0007669"/>
    <property type="project" value="UniProtKB-KW"/>
</dbReference>
<dbReference type="Gene3D" id="3.30.465.10">
    <property type="match status" value="2"/>
</dbReference>
<dbReference type="InterPro" id="IPR012951">
    <property type="entry name" value="BBE"/>
</dbReference>
<dbReference type="InterPro" id="IPR016166">
    <property type="entry name" value="FAD-bd_PCMH"/>
</dbReference>
<dbReference type="InterPro" id="IPR036318">
    <property type="entry name" value="FAD-bd_PCMH-like_sf"/>
</dbReference>
<dbReference type="InterPro" id="IPR016169">
    <property type="entry name" value="FAD-bd_PCMH_sub2"/>
</dbReference>
<dbReference type="InterPro" id="IPR050416">
    <property type="entry name" value="FAD-linked_Oxidoreductase"/>
</dbReference>
<dbReference type="InterPro" id="IPR006094">
    <property type="entry name" value="Oxid_FAD_bind_N"/>
</dbReference>
<dbReference type="PANTHER" id="PTHR42973">
    <property type="entry name" value="BINDING OXIDOREDUCTASE, PUTATIVE (AFU_ORTHOLOGUE AFUA_1G17690)-RELATED"/>
    <property type="match status" value="1"/>
</dbReference>
<dbReference type="PANTHER" id="PTHR42973:SF39">
    <property type="entry name" value="FAD-BINDING PCMH-TYPE DOMAIN-CONTAINING PROTEIN"/>
    <property type="match status" value="1"/>
</dbReference>
<dbReference type="Pfam" id="PF08031">
    <property type="entry name" value="BBE"/>
    <property type="match status" value="1"/>
</dbReference>
<dbReference type="Pfam" id="PF01565">
    <property type="entry name" value="FAD_binding_4"/>
    <property type="match status" value="1"/>
</dbReference>
<dbReference type="SUPFAM" id="SSF56176">
    <property type="entry name" value="FAD-binding/transporter-associated domain-like"/>
    <property type="match status" value="1"/>
</dbReference>
<dbReference type="PROSITE" id="PS51387">
    <property type="entry name" value="FAD_PCMH"/>
    <property type="match status" value="1"/>
</dbReference>
<keyword id="KW-0274">FAD</keyword>
<keyword id="KW-0285">Flavoprotein</keyword>
<keyword id="KW-0325">Glycoprotein</keyword>
<keyword id="KW-0560">Oxidoreductase</keyword>
<keyword id="KW-0732">Signal</keyword>
<organism>
    <name type="scientific">Penicillium thymicola</name>
    <dbReference type="NCBI Taxonomy" id="293382"/>
    <lineage>
        <taxon>Eukaryota</taxon>
        <taxon>Fungi</taxon>
        <taxon>Dikarya</taxon>
        <taxon>Ascomycota</taxon>
        <taxon>Pezizomycotina</taxon>
        <taxon>Eurotiomycetes</taxon>
        <taxon>Eurotiomycetidae</taxon>
        <taxon>Eurotiales</taxon>
        <taxon>Aspergillaceae</taxon>
        <taxon>Penicillium</taxon>
    </lineage>
</organism>
<proteinExistence type="evidence at protein level"/>
<gene>
    <name evidence="9" type="primary">penH</name>
</gene>
<sequence>MLPRALTLSALLALLLAIYLALAPARLSCRCRSWEQCWPSLEAWSHLNASLNSHLVDLRPIASVCHEPILDQPACDIVRRMSNSGRWRTGQPGALINSFWESGFGSNETCSLSSGQENLCHQGRIPLYAAVVESTQEVQTAVKFAREHNLRLVIRNTGHDGAGSSSGPDSFQIFTHRLSDILYHENFRITGSNTSVGPAVSIGAGVLFGDLYVHGGQKGFIVTGGDSATVGAAGGFTQGGGVPGFLGHTWGLAADNVLEFEIVTATGNLVIANAGQHPDLFWALRGGGGGTFGVAVRVTMRTYPDHPAVKSTISITGDGQSPSFWSEGIAGLLTVLQSLNRQGTAGVFRLWQTPAGLLGASTEVYFLNQTEVKDASSVIKSTLGNASDIYIISSNALDTLSSDVEADAPTINELFGSTLVSNGLFQSESGPKLIAERMSQIGLNDGEWILTSNLGGQVNDNKRANTPLHPAWQSSAQLVSLVVNVDTAPGARDRAMRRLTNELMPRLYALDPSQRVSYRNMGDPNEPHFKEVYWGATNYDRLVQIKRDWDPKDLFISRVGIGSERWDFEGFCKV</sequence>
<accession>A0A1B2CTB4</accession>